<sequence length="489" mass="53528">MSPPLVIKNGTVVNEDGMFKADVLVKNGIIVEVSPKIIALPEMEIIDATDRLVIPGGIDPHTHMQMPYAGEVTKDDFLRGTQAAVAGGTTMIIDFCCPDHRNGESLMAGYARWRSWADPKVCCDYGLSVAITQWRPETADQMAVITSPEFGVNSFKFYMAYEGTLMVRDDEMYRAMQECAKLRALARVHAENGSVIKEREIDLLAKGVTGPEGHTQSRPEEIEAEATNRACVLAAQANCPVYIVHVMTKGAAAAISHHRAQGSIVFGEPIAAGLALDGSHYYNEDWLHAARYVMSPPLSRDPTTPELLMKLLAAGELHLTGTDNCTYDGCQKSLGKGNFTKIPNGINGVEDRMSVVWEKGVHSGIIDPMRYVSITSATAAKIFNIYPKKGRIAVGSDADIVIFNPNATRTISAETHHHNLDFNIFEGIKCHGVAEITISRGRIVWANGQLQTVPGSGKFVPLLANSPFVFSSHEIREKKKEPRIVERLE</sequence>
<protein>
    <recommendedName>
        <fullName>Dihydropyrimidinase 1</fullName>
        <ecNumber evidence="2">3.5.2.2</ecNumber>
    </recommendedName>
</protein>
<evidence type="ECO:0000250" key="1"/>
<evidence type="ECO:0000250" key="2">
    <source>
        <dbReference type="UniProtKB" id="Q55DL0"/>
    </source>
</evidence>
<evidence type="ECO:0000250" key="3">
    <source>
        <dbReference type="UniProtKB" id="Q9P903"/>
    </source>
</evidence>
<evidence type="ECO:0000305" key="4"/>
<name>DHP1_CAEBR</name>
<proteinExistence type="inferred from homology"/>
<accession>Q60Q85</accession>
<accession>A8Y179</accession>
<dbReference type="EC" id="3.5.2.2" evidence="2"/>
<dbReference type="EMBL" id="HE600952">
    <property type="protein sequence ID" value="CAP38640.1"/>
    <property type="molecule type" value="Genomic_DNA"/>
</dbReference>
<dbReference type="SMR" id="Q60Q85"/>
<dbReference type="FunCoup" id="Q60Q85">
    <property type="interactions" value="1144"/>
</dbReference>
<dbReference type="STRING" id="6238.Q60Q85"/>
<dbReference type="EnsemblMetazoa" id="CBG21922.1">
    <property type="protein sequence ID" value="CBG21922.1"/>
    <property type="gene ID" value="WBGene00040591"/>
</dbReference>
<dbReference type="KEGG" id="cbr:CBG_21922"/>
<dbReference type="CTD" id="8572900"/>
<dbReference type="WormBase" id="CBG21922">
    <property type="protein sequence ID" value="CBP05205"/>
    <property type="gene ID" value="WBGene00040591"/>
    <property type="gene designation" value="Cbr-dhp-1"/>
</dbReference>
<dbReference type="eggNOG" id="KOG2584">
    <property type="taxonomic scope" value="Eukaryota"/>
</dbReference>
<dbReference type="HOGENOM" id="CLU_015572_2_2_1"/>
<dbReference type="InParanoid" id="Q60Q85"/>
<dbReference type="OMA" id="RSSIKVH"/>
<dbReference type="OrthoDB" id="10258955at2759"/>
<dbReference type="Proteomes" id="UP000008549">
    <property type="component" value="Unassembled WGS sequence"/>
</dbReference>
<dbReference type="GO" id="GO:0005829">
    <property type="term" value="C:cytosol"/>
    <property type="evidence" value="ECO:0000318"/>
    <property type="project" value="GO_Central"/>
</dbReference>
<dbReference type="GO" id="GO:0005634">
    <property type="term" value="C:nucleus"/>
    <property type="evidence" value="ECO:0007669"/>
    <property type="project" value="UniProtKB-SubCell"/>
</dbReference>
<dbReference type="GO" id="GO:0004157">
    <property type="term" value="F:dihydropyrimidinase activity"/>
    <property type="evidence" value="ECO:0000318"/>
    <property type="project" value="GO_Central"/>
</dbReference>
<dbReference type="GO" id="GO:0046872">
    <property type="term" value="F:metal ion binding"/>
    <property type="evidence" value="ECO:0007669"/>
    <property type="project" value="UniProtKB-KW"/>
</dbReference>
<dbReference type="GO" id="GO:0006208">
    <property type="term" value="P:pyrimidine nucleobase catabolic process"/>
    <property type="evidence" value="ECO:0000318"/>
    <property type="project" value="GO_Central"/>
</dbReference>
<dbReference type="CDD" id="cd01314">
    <property type="entry name" value="D-HYD"/>
    <property type="match status" value="1"/>
</dbReference>
<dbReference type="FunFam" id="3.20.20.140:FF:000001">
    <property type="entry name" value="Dihydropyrimidinase like 3"/>
    <property type="match status" value="1"/>
</dbReference>
<dbReference type="Gene3D" id="3.20.20.140">
    <property type="entry name" value="Metal-dependent hydrolases"/>
    <property type="match status" value="1"/>
</dbReference>
<dbReference type="Gene3D" id="2.30.40.10">
    <property type="entry name" value="Urease, subunit C, domain 1"/>
    <property type="match status" value="1"/>
</dbReference>
<dbReference type="InterPro" id="IPR006680">
    <property type="entry name" value="Amidohydro-rel"/>
</dbReference>
<dbReference type="InterPro" id="IPR011778">
    <property type="entry name" value="Hydantoinase/dihydroPyrase"/>
</dbReference>
<dbReference type="InterPro" id="IPR011059">
    <property type="entry name" value="Metal-dep_hydrolase_composite"/>
</dbReference>
<dbReference type="InterPro" id="IPR032466">
    <property type="entry name" value="Metal_Hydrolase"/>
</dbReference>
<dbReference type="InterPro" id="IPR050378">
    <property type="entry name" value="Metallo-dep_Hydrolases_sf"/>
</dbReference>
<dbReference type="NCBIfam" id="TIGR02033">
    <property type="entry name" value="D-hydantoinase"/>
    <property type="match status" value="1"/>
</dbReference>
<dbReference type="PANTHER" id="PTHR11647:SF65">
    <property type="entry name" value="DIHYDROPYRIMIDINASE 1"/>
    <property type="match status" value="1"/>
</dbReference>
<dbReference type="PANTHER" id="PTHR11647">
    <property type="entry name" value="HYDRANTOINASE/DIHYDROPYRIMIDINASE FAMILY MEMBER"/>
    <property type="match status" value="1"/>
</dbReference>
<dbReference type="Pfam" id="PF01979">
    <property type="entry name" value="Amidohydro_1"/>
    <property type="match status" value="1"/>
</dbReference>
<dbReference type="SUPFAM" id="SSF51338">
    <property type="entry name" value="Composite domain of metallo-dependent hydrolases"/>
    <property type="match status" value="2"/>
</dbReference>
<dbReference type="SUPFAM" id="SSF51556">
    <property type="entry name" value="Metallo-dependent hydrolases"/>
    <property type="match status" value="1"/>
</dbReference>
<keyword id="KW-0378">Hydrolase</keyword>
<keyword id="KW-0479">Metal-binding</keyword>
<keyword id="KW-0539">Nucleus</keyword>
<keyword id="KW-1185">Reference proteome</keyword>
<keyword id="KW-0862">Zinc</keyword>
<comment type="catalytic activity">
    <reaction evidence="2">
        <text>5,6-dihydrouracil + H2O = 3-(carbamoylamino)propanoate + H(+)</text>
        <dbReference type="Rhea" id="RHEA:16121"/>
        <dbReference type="ChEBI" id="CHEBI:11892"/>
        <dbReference type="ChEBI" id="CHEBI:15377"/>
        <dbReference type="ChEBI" id="CHEBI:15378"/>
        <dbReference type="ChEBI" id="CHEBI:15901"/>
        <dbReference type="EC" id="3.5.2.2"/>
    </reaction>
</comment>
<comment type="cofactor">
    <cofactor evidence="2">
        <name>Zn(2+)</name>
        <dbReference type="ChEBI" id="CHEBI:29105"/>
    </cofactor>
    <text evidence="2">Binds 2 Zn(2+) ions per subunit.</text>
</comment>
<comment type="subunit">
    <text evidence="2">Homotetramer.</text>
</comment>
<comment type="subcellular location">
    <subcellularLocation>
        <location evidence="1">Nucleus</location>
    </subcellularLocation>
</comment>
<comment type="PTM">
    <text evidence="1">Carboxylation allows a single lysine to coordinate two zinc ions.</text>
</comment>
<comment type="similarity">
    <text evidence="4">Belongs to the metallo-dependent hydrolases superfamily. Hydantoinase/dihydropyrimidinase family.</text>
</comment>
<reference key="1">
    <citation type="journal article" date="2003" name="PLoS Biol.">
        <title>The genome sequence of Caenorhabditis briggsae: a platform for comparative genomics.</title>
        <authorList>
            <person name="Stein L.D."/>
            <person name="Bao Z."/>
            <person name="Blasiar D."/>
            <person name="Blumenthal T."/>
            <person name="Brent M.R."/>
            <person name="Chen N."/>
            <person name="Chinwalla A."/>
            <person name="Clarke L."/>
            <person name="Clee C."/>
            <person name="Coghlan A."/>
            <person name="Coulson A."/>
            <person name="D'Eustachio P."/>
            <person name="Fitch D.H.A."/>
            <person name="Fulton L.A."/>
            <person name="Fulton R.E."/>
            <person name="Griffiths-Jones S."/>
            <person name="Harris T.W."/>
            <person name="Hillier L.W."/>
            <person name="Kamath R."/>
            <person name="Kuwabara P.E."/>
            <person name="Mardis E.R."/>
            <person name="Marra M.A."/>
            <person name="Miner T.L."/>
            <person name="Minx P."/>
            <person name="Mullikin J.C."/>
            <person name="Plumb R.W."/>
            <person name="Rogers J."/>
            <person name="Schein J.E."/>
            <person name="Sohrmann M."/>
            <person name="Spieth J."/>
            <person name="Stajich J.E."/>
            <person name="Wei C."/>
            <person name="Willey D."/>
            <person name="Wilson R.K."/>
            <person name="Durbin R.M."/>
            <person name="Waterston R.H."/>
        </authorList>
    </citation>
    <scope>NUCLEOTIDE SEQUENCE [LARGE SCALE GENOMIC DNA]</scope>
    <source>
        <strain>AF16</strain>
    </source>
</reference>
<gene>
    <name type="primary">dhp-1</name>
    <name type="ORF">CBG21922</name>
</gene>
<feature type="chain" id="PRO_0000165928" description="Dihydropyrimidinase 1">
    <location>
        <begin position="1"/>
        <end position="489"/>
    </location>
</feature>
<feature type="binding site" evidence="3">
    <location>
        <position position="61"/>
    </location>
    <ligand>
        <name>Zn(2+)</name>
        <dbReference type="ChEBI" id="CHEBI:29105"/>
        <label>1</label>
    </ligand>
</feature>
<feature type="binding site" evidence="3">
    <location>
        <position position="63"/>
    </location>
    <ligand>
        <name>Zn(2+)</name>
        <dbReference type="ChEBI" id="CHEBI:29105"/>
        <label>1</label>
    </ligand>
</feature>
<feature type="binding site" description="via carbamate group" evidence="3">
    <location>
        <position position="156"/>
    </location>
    <ligand>
        <name>Zn(2+)</name>
        <dbReference type="ChEBI" id="CHEBI:29105"/>
        <label>1</label>
    </ligand>
</feature>
<feature type="binding site" description="via carbamate group" evidence="3">
    <location>
        <position position="156"/>
    </location>
    <ligand>
        <name>Zn(2+)</name>
        <dbReference type="ChEBI" id="CHEBI:29105"/>
        <label>2</label>
    </ligand>
</feature>
<feature type="binding site" evidence="3">
    <location>
        <position position="161"/>
    </location>
    <ligand>
        <name>substrate</name>
    </ligand>
</feature>
<feature type="binding site" evidence="3">
    <location>
        <position position="189"/>
    </location>
    <ligand>
        <name>Zn(2+)</name>
        <dbReference type="ChEBI" id="CHEBI:29105"/>
        <label>2</label>
    </ligand>
</feature>
<feature type="binding site" evidence="3">
    <location>
        <position position="245"/>
    </location>
    <ligand>
        <name>Zn(2+)</name>
        <dbReference type="ChEBI" id="CHEBI:29105"/>
        <label>2</label>
    </ligand>
</feature>
<feature type="binding site" evidence="3">
    <location>
        <position position="295"/>
    </location>
    <ligand>
        <name>substrate</name>
    </ligand>
</feature>
<feature type="binding site" evidence="3">
    <location>
        <position position="323"/>
    </location>
    <ligand>
        <name>Zn(2+)</name>
        <dbReference type="ChEBI" id="CHEBI:29105"/>
        <label>1</label>
    </ligand>
</feature>
<feature type="binding site" evidence="3">
    <location>
        <position position="344"/>
    </location>
    <ligand>
        <name>substrate</name>
    </ligand>
</feature>
<feature type="modified residue" description="N6-carboxylysine" evidence="3">
    <location>
        <position position="156"/>
    </location>
</feature>
<organism>
    <name type="scientific">Caenorhabditis briggsae</name>
    <dbReference type="NCBI Taxonomy" id="6238"/>
    <lineage>
        <taxon>Eukaryota</taxon>
        <taxon>Metazoa</taxon>
        <taxon>Ecdysozoa</taxon>
        <taxon>Nematoda</taxon>
        <taxon>Chromadorea</taxon>
        <taxon>Rhabditida</taxon>
        <taxon>Rhabditina</taxon>
        <taxon>Rhabditomorpha</taxon>
        <taxon>Rhabditoidea</taxon>
        <taxon>Rhabditidae</taxon>
        <taxon>Peloderinae</taxon>
        <taxon>Caenorhabditis</taxon>
    </lineage>
</organism>